<organismHost>
    <name type="scientific">Acanthamoeba polyphaga</name>
    <name type="common">Amoeba</name>
    <dbReference type="NCBI Taxonomy" id="5757"/>
</organismHost>
<accession>Q5UQQ0</accession>
<name>YL452_MIMIV</name>
<protein>
    <recommendedName>
        <fullName>Uncharacterized protein L452</fullName>
    </recommendedName>
</protein>
<reference key="1">
    <citation type="journal article" date="2004" name="Science">
        <title>The 1.2-megabase genome sequence of Mimivirus.</title>
        <authorList>
            <person name="Raoult D."/>
            <person name="Audic S."/>
            <person name="Robert C."/>
            <person name="Abergel C."/>
            <person name="Renesto P."/>
            <person name="Ogata H."/>
            <person name="La Scola B."/>
            <person name="Susan M."/>
            <person name="Claverie J.-M."/>
        </authorList>
    </citation>
    <scope>NUCLEOTIDE SEQUENCE [LARGE SCALE GENOMIC DNA]</scope>
    <source>
        <strain>Rowbotham-Bradford</strain>
    </source>
</reference>
<reference key="2">
    <citation type="journal article" date="2006" name="J. Virol.">
        <title>Mimivirus giant particles incorporate a large fraction of anonymous and unique gene products.</title>
        <authorList>
            <person name="Renesto P."/>
            <person name="Abergel C."/>
            <person name="Decloquement P."/>
            <person name="Moinier D."/>
            <person name="Azza S."/>
            <person name="Ogata H."/>
            <person name="Fourquet P."/>
            <person name="Gorvel J.-P."/>
            <person name="Claverie J.-M."/>
            <person name="Raoult D."/>
        </authorList>
    </citation>
    <scope>IDENTIFICATION BY MASS SPECTROMETRY [LARGE SCALE ANALYSIS]</scope>
    <scope>SUBCELLULAR LOCATION</scope>
</reference>
<feature type="chain" id="PRO_0000071283" description="Uncharacterized protein L452">
    <location>
        <begin position="1"/>
        <end position="502"/>
    </location>
</feature>
<feature type="region of interest" description="Disordered" evidence="1">
    <location>
        <begin position="1"/>
        <end position="57"/>
    </location>
</feature>
<feature type="region of interest" description="Disordered" evidence="1">
    <location>
        <begin position="155"/>
        <end position="181"/>
    </location>
</feature>
<feature type="region of interest" description="Disordered" evidence="1">
    <location>
        <begin position="212"/>
        <end position="362"/>
    </location>
</feature>
<feature type="region of interest" description="Disordered" evidence="1">
    <location>
        <begin position="438"/>
        <end position="487"/>
    </location>
</feature>
<feature type="compositionally biased region" description="Low complexity" evidence="1">
    <location>
        <begin position="1"/>
        <end position="10"/>
    </location>
</feature>
<feature type="compositionally biased region" description="Low complexity" evidence="1">
    <location>
        <begin position="28"/>
        <end position="47"/>
    </location>
</feature>
<feature type="compositionally biased region" description="Low complexity" evidence="1">
    <location>
        <begin position="155"/>
        <end position="171"/>
    </location>
</feature>
<feature type="compositionally biased region" description="Polar residues" evidence="1">
    <location>
        <begin position="212"/>
        <end position="230"/>
    </location>
</feature>
<feature type="compositionally biased region" description="Low complexity" evidence="1">
    <location>
        <begin position="242"/>
        <end position="290"/>
    </location>
</feature>
<feature type="compositionally biased region" description="Low complexity" evidence="1">
    <location>
        <begin position="309"/>
        <end position="327"/>
    </location>
</feature>
<feature type="compositionally biased region" description="Polar residues" evidence="1">
    <location>
        <begin position="339"/>
        <end position="348"/>
    </location>
</feature>
<feature type="compositionally biased region" description="Low complexity" evidence="1">
    <location>
        <begin position="446"/>
        <end position="460"/>
    </location>
</feature>
<feature type="compositionally biased region" description="Polar residues" evidence="1">
    <location>
        <begin position="470"/>
        <end position="487"/>
    </location>
</feature>
<dbReference type="EMBL" id="AY653733">
    <property type="protein sequence ID" value="AAV50718.1"/>
    <property type="molecule type" value="Genomic_DNA"/>
</dbReference>
<dbReference type="KEGG" id="vg:9925077"/>
<dbReference type="OrthoDB" id="39489at10239"/>
<dbReference type="Proteomes" id="UP000001134">
    <property type="component" value="Genome"/>
</dbReference>
<dbReference type="GO" id="GO:0044423">
    <property type="term" value="C:virion component"/>
    <property type="evidence" value="ECO:0007669"/>
    <property type="project" value="UniProtKB-KW"/>
</dbReference>
<proteinExistence type="evidence at protein level"/>
<gene>
    <name type="ordered locus">MIMI_L452</name>
</gene>
<comment type="subcellular location">
    <subcellularLocation>
        <location evidence="2">Virion</location>
    </subcellularLocation>
</comment>
<keyword id="KW-1185">Reference proteome</keyword>
<keyword id="KW-0946">Virion</keyword>
<organism>
    <name type="scientific">Acanthamoeba polyphaga mimivirus</name>
    <name type="common">APMV</name>
    <dbReference type="NCBI Taxonomy" id="212035"/>
    <lineage>
        <taxon>Viruses</taxon>
        <taxon>Varidnaviria</taxon>
        <taxon>Bamfordvirae</taxon>
        <taxon>Nucleocytoviricota</taxon>
        <taxon>Megaviricetes</taxon>
        <taxon>Imitervirales</taxon>
        <taxon>Mimiviridae</taxon>
        <taxon>Megamimivirinae</taxon>
        <taxon>Mimivirus</taxon>
        <taxon>Mimivirus bradfordmassiliense</taxon>
    </lineage>
</organism>
<evidence type="ECO:0000256" key="1">
    <source>
        <dbReference type="SAM" id="MobiDB-lite"/>
    </source>
</evidence>
<evidence type="ECO:0000269" key="2">
    <source>
    </source>
</evidence>
<sequence length="502" mass="54715">MQSTTNNNTNKKNHARSNRSDNLSTVVSNRSAYRSASKSASRSNNLSTPGQSRVISYDDDITSDYNTYTINDYIDDPTTDQNTVNDDEGNIYGGNFFDGFIPTSNLFADNYEIKKLDDVIARTNNIMYGGRIPEDQIISTESNNIFGIKDFRVTNTEDTNDDNSNSQSVNSRTDSDNLSARNTSISNSLLTSGRNSASIRNANPLLVRNATSLGNSERNSPDRPSTQGDSSIRGEADNFSGRNASARNSASNKNSASRSSVSNKNSASRSSASRSSVSRNSESIKSSSRNSESRNLESNKNSTSRNLESNKNSASRNSASRNSTSIKSDSKNSDSRNSQTNKSKNQRGGLSEIKGIPVTDKFIGQNEIPTSSLGTHQYEPNYSLTSPGSIISTSSKLNNEAIRGINNRPIAGKNQVYPDTITDTNDLSSFFANTESNTIDQFGGQTSDKNNSTKSNTKYNKSSRKISEISYGTSKRSHNRSSNTSNLKSETDYDIFTANSEL</sequence>